<keyword id="KW-0113">Calvin cycle</keyword>
<keyword id="KW-0120">Carbon dioxide fixation</keyword>
<keyword id="KW-0456">Lyase</keyword>
<keyword id="KW-0460">Magnesium</keyword>
<keyword id="KW-0479">Metal-binding</keyword>
<keyword id="KW-0503">Monooxygenase</keyword>
<keyword id="KW-0560">Oxidoreductase</keyword>
<keyword id="KW-0602">Photosynthesis</keyword>
<accession>Q07N61</accession>
<comment type="function">
    <text evidence="1">RuBisCO catalyzes two reactions: the carboxylation of D-ribulose 1,5-bisphosphate, the primary event in carbon dioxide fixation, as well as the oxidative fragmentation of the pentose substrate. Both reactions occur simultaneously and in competition at the same active site.</text>
</comment>
<comment type="catalytic activity">
    <reaction evidence="1">
        <text>2 (2R)-3-phosphoglycerate + 2 H(+) = D-ribulose 1,5-bisphosphate + CO2 + H2O</text>
        <dbReference type="Rhea" id="RHEA:23124"/>
        <dbReference type="ChEBI" id="CHEBI:15377"/>
        <dbReference type="ChEBI" id="CHEBI:15378"/>
        <dbReference type="ChEBI" id="CHEBI:16526"/>
        <dbReference type="ChEBI" id="CHEBI:57870"/>
        <dbReference type="ChEBI" id="CHEBI:58272"/>
        <dbReference type="EC" id="4.1.1.39"/>
    </reaction>
</comment>
<comment type="catalytic activity">
    <reaction evidence="1">
        <text>D-ribulose 1,5-bisphosphate + O2 = 2-phosphoglycolate + (2R)-3-phosphoglycerate + 2 H(+)</text>
        <dbReference type="Rhea" id="RHEA:36631"/>
        <dbReference type="ChEBI" id="CHEBI:15378"/>
        <dbReference type="ChEBI" id="CHEBI:15379"/>
        <dbReference type="ChEBI" id="CHEBI:57870"/>
        <dbReference type="ChEBI" id="CHEBI:58033"/>
        <dbReference type="ChEBI" id="CHEBI:58272"/>
    </reaction>
</comment>
<comment type="cofactor">
    <cofactor evidence="1">
        <name>Mg(2+)</name>
        <dbReference type="ChEBI" id="CHEBI:18420"/>
    </cofactor>
    <text evidence="1">Binds 1 Mg(2+) ion per subunit.</text>
</comment>
<comment type="subunit">
    <text evidence="1">Homodimer.</text>
</comment>
<comment type="miscellaneous">
    <text evidence="1">The basic functional RuBisCO is composed of a large chain homodimer in a 'head-to-tail' conformation. In contrast to form I RuBisCO, the form II RuBisCO are composed solely of large subunits.</text>
</comment>
<comment type="similarity">
    <text evidence="1">Belongs to the RuBisCO large chain family. Type II subfamily.</text>
</comment>
<gene>
    <name evidence="1" type="primary">cbbM</name>
    <name type="ordered locus">RPE_2686</name>
</gene>
<protein>
    <recommendedName>
        <fullName evidence="1">Ribulose bisphosphate carboxylase</fullName>
        <shortName evidence="1">RuBisCO</shortName>
        <ecNumber evidence="1">4.1.1.39</ecNumber>
    </recommendedName>
</protein>
<dbReference type="EC" id="4.1.1.39" evidence="1"/>
<dbReference type="EMBL" id="CP000463">
    <property type="protein sequence ID" value="ABJ06623.1"/>
    <property type="molecule type" value="Genomic_DNA"/>
</dbReference>
<dbReference type="SMR" id="Q07N61"/>
<dbReference type="STRING" id="316055.RPE_2686"/>
<dbReference type="KEGG" id="rpe:RPE_2686"/>
<dbReference type="eggNOG" id="COG1850">
    <property type="taxonomic scope" value="Bacteria"/>
</dbReference>
<dbReference type="HOGENOM" id="CLU_031450_3_1_5"/>
<dbReference type="OrthoDB" id="9764279at2"/>
<dbReference type="GO" id="GO:0000287">
    <property type="term" value="F:magnesium ion binding"/>
    <property type="evidence" value="ECO:0007669"/>
    <property type="project" value="UniProtKB-UniRule"/>
</dbReference>
<dbReference type="GO" id="GO:0004497">
    <property type="term" value="F:monooxygenase activity"/>
    <property type="evidence" value="ECO:0007669"/>
    <property type="project" value="UniProtKB-KW"/>
</dbReference>
<dbReference type="GO" id="GO:0016984">
    <property type="term" value="F:ribulose-bisphosphate carboxylase activity"/>
    <property type="evidence" value="ECO:0007669"/>
    <property type="project" value="UniProtKB-UniRule"/>
</dbReference>
<dbReference type="GO" id="GO:0019253">
    <property type="term" value="P:reductive pentose-phosphate cycle"/>
    <property type="evidence" value="ECO:0007669"/>
    <property type="project" value="UniProtKB-KW"/>
</dbReference>
<dbReference type="CDD" id="cd08211">
    <property type="entry name" value="RuBisCO_large_II"/>
    <property type="match status" value="1"/>
</dbReference>
<dbReference type="Gene3D" id="3.20.20.110">
    <property type="entry name" value="Ribulose bisphosphate carboxylase, large subunit, C-terminal domain"/>
    <property type="match status" value="1"/>
</dbReference>
<dbReference type="Gene3D" id="3.30.70.150">
    <property type="entry name" value="RuBisCO large subunit, N-terminal domain"/>
    <property type="match status" value="1"/>
</dbReference>
<dbReference type="HAMAP" id="MF_01339">
    <property type="entry name" value="RuBisCO_L_type2"/>
    <property type="match status" value="1"/>
</dbReference>
<dbReference type="InterPro" id="IPR033966">
    <property type="entry name" value="RuBisCO"/>
</dbReference>
<dbReference type="InterPro" id="IPR020878">
    <property type="entry name" value="RuBisCo_large_chain_AS"/>
</dbReference>
<dbReference type="InterPro" id="IPR000685">
    <property type="entry name" value="RuBisCO_lsu_C"/>
</dbReference>
<dbReference type="InterPro" id="IPR036376">
    <property type="entry name" value="RuBisCO_lsu_C_sf"/>
</dbReference>
<dbReference type="InterPro" id="IPR017443">
    <property type="entry name" value="RuBisCO_lsu_fd_N"/>
</dbReference>
<dbReference type="InterPro" id="IPR036422">
    <property type="entry name" value="RuBisCO_lsu_N_sf"/>
</dbReference>
<dbReference type="InterPro" id="IPR020871">
    <property type="entry name" value="RuBisCO_lsuII"/>
</dbReference>
<dbReference type="NCBIfam" id="NF010002">
    <property type="entry name" value="PRK13475.1"/>
    <property type="match status" value="1"/>
</dbReference>
<dbReference type="PANTHER" id="PTHR42704">
    <property type="entry name" value="RIBULOSE BISPHOSPHATE CARBOXYLASE"/>
    <property type="match status" value="1"/>
</dbReference>
<dbReference type="PANTHER" id="PTHR42704:SF17">
    <property type="entry name" value="RIBULOSE BISPHOSPHATE CARBOXYLASE LARGE CHAIN"/>
    <property type="match status" value="1"/>
</dbReference>
<dbReference type="Pfam" id="PF00016">
    <property type="entry name" value="RuBisCO_large"/>
    <property type="match status" value="1"/>
</dbReference>
<dbReference type="Pfam" id="PF02788">
    <property type="entry name" value="RuBisCO_large_N"/>
    <property type="match status" value="1"/>
</dbReference>
<dbReference type="SUPFAM" id="SSF51649">
    <property type="entry name" value="RuBisCo, C-terminal domain"/>
    <property type="match status" value="1"/>
</dbReference>
<dbReference type="SUPFAM" id="SSF54966">
    <property type="entry name" value="RuBisCO, large subunit, small (N-terminal) domain"/>
    <property type="match status" value="1"/>
</dbReference>
<dbReference type="PROSITE" id="PS00157">
    <property type="entry name" value="RUBISCO_LARGE"/>
    <property type="match status" value="1"/>
</dbReference>
<organism>
    <name type="scientific">Rhodopseudomonas palustris (strain BisA53)</name>
    <dbReference type="NCBI Taxonomy" id="316055"/>
    <lineage>
        <taxon>Bacteria</taxon>
        <taxon>Pseudomonadati</taxon>
        <taxon>Pseudomonadota</taxon>
        <taxon>Alphaproteobacteria</taxon>
        <taxon>Hyphomicrobiales</taxon>
        <taxon>Nitrobacteraceae</taxon>
        <taxon>Rhodopseudomonas</taxon>
    </lineage>
</organism>
<reference key="1">
    <citation type="submission" date="2006-09" db="EMBL/GenBank/DDBJ databases">
        <title>Complete sequence of Rhodopseudomonas palustris BisA53.</title>
        <authorList>
            <consortium name="US DOE Joint Genome Institute"/>
            <person name="Copeland A."/>
            <person name="Lucas S."/>
            <person name="Lapidus A."/>
            <person name="Barry K."/>
            <person name="Detter J.C."/>
            <person name="Glavina del Rio T."/>
            <person name="Hammon N."/>
            <person name="Israni S."/>
            <person name="Dalin E."/>
            <person name="Tice H."/>
            <person name="Pitluck S."/>
            <person name="Chain P."/>
            <person name="Malfatti S."/>
            <person name="Shin M."/>
            <person name="Vergez L."/>
            <person name="Schmutz J."/>
            <person name="Larimer F."/>
            <person name="Land M."/>
            <person name="Hauser L."/>
            <person name="Pelletier D.A."/>
            <person name="Kyrpides N."/>
            <person name="Kim E."/>
            <person name="Harwood C.S."/>
            <person name="Oda Y."/>
            <person name="Richardson P."/>
        </authorList>
    </citation>
    <scope>NUCLEOTIDE SEQUENCE [LARGE SCALE GENOMIC DNA]</scope>
    <source>
        <strain>BisA53</strain>
    </source>
</reference>
<proteinExistence type="inferred from homology"/>
<name>RBL2_RHOP5</name>
<feature type="chain" id="PRO_1000067650" description="Ribulose bisphosphate carboxylase">
    <location>
        <begin position="1"/>
        <end position="460"/>
    </location>
</feature>
<feature type="active site" description="Proton acceptor" evidence="1">
    <location>
        <position position="167"/>
    </location>
</feature>
<feature type="active site" description="Proton acceptor" evidence="1">
    <location>
        <position position="288"/>
    </location>
</feature>
<feature type="binding site" description="in homodimeric partner" evidence="1">
    <location>
        <position position="112"/>
    </location>
    <ligand>
        <name>substrate</name>
    </ligand>
</feature>
<feature type="binding site" evidence="1">
    <location>
        <position position="169"/>
    </location>
    <ligand>
        <name>substrate</name>
    </ligand>
</feature>
<feature type="binding site" description="via carbamate group" evidence="1">
    <location>
        <position position="192"/>
    </location>
    <ligand>
        <name>Mg(2+)</name>
        <dbReference type="ChEBI" id="CHEBI:18420"/>
    </ligand>
</feature>
<feature type="binding site" evidence="1">
    <location>
        <position position="194"/>
    </location>
    <ligand>
        <name>Mg(2+)</name>
        <dbReference type="ChEBI" id="CHEBI:18420"/>
    </ligand>
</feature>
<feature type="binding site" evidence="1">
    <location>
        <position position="195"/>
    </location>
    <ligand>
        <name>Mg(2+)</name>
        <dbReference type="ChEBI" id="CHEBI:18420"/>
    </ligand>
</feature>
<feature type="binding site" evidence="1">
    <location>
        <position position="289"/>
    </location>
    <ligand>
        <name>substrate</name>
    </ligand>
</feature>
<feature type="binding site" evidence="1">
    <location>
        <position position="322"/>
    </location>
    <ligand>
        <name>substrate</name>
    </ligand>
</feature>
<feature type="binding site" evidence="1">
    <location>
        <position position="369"/>
    </location>
    <ligand>
        <name>substrate</name>
    </ligand>
</feature>
<feature type="site" description="Transition state stabilizer" evidence="1">
    <location>
        <position position="330"/>
    </location>
</feature>
<feature type="modified residue" description="N6-carboxylysine" evidence="1">
    <location>
        <position position="192"/>
    </location>
</feature>
<evidence type="ECO:0000255" key="1">
    <source>
        <dbReference type="HAMAP-Rule" id="MF_01339"/>
    </source>
</evidence>
<sequence length="460" mass="50252">MDQSSRYANLNLKEKDLIAGGRHVLCAYIVKPKAGFGDFLQTAAHFAAESSTGTNVEVSTTDDFTRGVDALVYEIDESKELMKIAYPVELFDRNVIDGRAMIASFLTLTIGNNQGMGDVEYAKMYDFYVPPAYLKLFDGPSTTIKDLWRVLGRPVVDGGFIVGTIIKPKLGLRPQPFANACFDFWLGGDFIKNDEPQGNQVFAPFKETVRAVNEAMRRAQDATGQAKLFSFNITADDHYEMLARGEYILETFGENADHIAFLVDGYVAGPAAVTTARRAFPKQYLHYHRAGHGAVTSPQSKRGYTAFVLSKMARLQGASGIHTGTMGFGKMEGEAADRAMAFMITEDSADGPYFHQEWLGMNPTTPIISGGMNALRMPGFFTNLGHSNLIMTAGGGAFGHLDGGAAGAKSLRQAEQCWKLGADPVQFAKEHHEFARAFESFSHDADKLFPGWRGQLGLAA</sequence>